<gene>
    <name type="primary">KIZ</name>
    <name type="synonym">PLK1S1</name>
    <name type="ORF">RCJMB04_13o7</name>
</gene>
<keyword id="KW-0966">Cell projection</keyword>
<keyword id="KW-0175">Coiled coil</keyword>
<keyword id="KW-0963">Cytoplasm</keyword>
<keyword id="KW-0206">Cytoskeleton</keyword>
<keyword id="KW-1185">Reference proteome</keyword>
<protein>
    <recommendedName>
        <fullName>Centrosomal protein kizuna</fullName>
    </recommendedName>
    <alternativeName>
        <fullName>Polo-like kinase 1 substrate 1</fullName>
    </alternativeName>
</protein>
<dbReference type="EMBL" id="AJ720271">
    <property type="protein sequence ID" value="CAG31930.1"/>
    <property type="molecule type" value="mRNA"/>
</dbReference>
<dbReference type="RefSeq" id="NP_001006394.1">
    <property type="nucleotide sequence ID" value="NM_001006394.2"/>
</dbReference>
<dbReference type="SMR" id="Q5ZK13"/>
<dbReference type="FunCoup" id="Q5ZK13">
    <property type="interactions" value="1023"/>
</dbReference>
<dbReference type="STRING" id="9031.ENSGALP00000039221"/>
<dbReference type="PaxDb" id="9031-ENSGALP00000039221"/>
<dbReference type="GeneID" id="421237"/>
<dbReference type="KEGG" id="gga:421237"/>
<dbReference type="CTD" id="55857"/>
<dbReference type="VEuPathDB" id="HostDB:geneid_421237"/>
<dbReference type="eggNOG" id="ENOG502R72X">
    <property type="taxonomic scope" value="Eukaryota"/>
</dbReference>
<dbReference type="HOGENOM" id="CLU_513477_0_0_1"/>
<dbReference type="InParanoid" id="Q5ZK13"/>
<dbReference type="OrthoDB" id="8015657at2759"/>
<dbReference type="PhylomeDB" id="Q5ZK13"/>
<dbReference type="PRO" id="PR:Q5ZK13"/>
<dbReference type="Proteomes" id="UP000000539">
    <property type="component" value="Chromosome 3"/>
</dbReference>
<dbReference type="Bgee" id="ENSGALG00000008386">
    <property type="expression patterns" value="Expressed in ovary and 13 other cell types or tissues"/>
</dbReference>
<dbReference type="GO" id="GO:0042995">
    <property type="term" value="C:cell projection"/>
    <property type="evidence" value="ECO:0007669"/>
    <property type="project" value="UniProtKB-KW"/>
</dbReference>
<dbReference type="GO" id="GO:0005813">
    <property type="term" value="C:centrosome"/>
    <property type="evidence" value="ECO:0000250"/>
    <property type="project" value="UniProtKB"/>
</dbReference>
<dbReference type="GO" id="GO:0005737">
    <property type="term" value="C:cytoplasm"/>
    <property type="evidence" value="ECO:0007669"/>
    <property type="project" value="UniProtKB-KW"/>
</dbReference>
<dbReference type="GO" id="GO:0007051">
    <property type="term" value="P:spindle organization"/>
    <property type="evidence" value="ECO:0000318"/>
    <property type="project" value="GO_Central"/>
</dbReference>
<dbReference type="InterPro" id="IPR026742">
    <property type="entry name" value="Centrosomal_kizuma"/>
</dbReference>
<dbReference type="PANTHER" id="PTHR16299">
    <property type="entry name" value="CENTROSOMAL PROTEIN KIZUNA"/>
    <property type="match status" value="1"/>
</dbReference>
<dbReference type="PANTHER" id="PTHR16299:SF2">
    <property type="entry name" value="CENTROSOMAL PROTEIN KIZUNA"/>
    <property type="match status" value="1"/>
</dbReference>
<evidence type="ECO:0000250" key="1">
    <source>
        <dbReference type="UniProtKB" id="Q2M2Z5"/>
    </source>
</evidence>
<evidence type="ECO:0000255" key="2"/>
<evidence type="ECO:0000256" key="3">
    <source>
        <dbReference type="SAM" id="MobiDB-lite"/>
    </source>
</evidence>
<evidence type="ECO:0000305" key="4"/>
<accession>Q5ZK13</accession>
<proteinExistence type="evidence at transcript level"/>
<organism>
    <name type="scientific">Gallus gallus</name>
    <name type="common">Chicken</name>
    <dbReference type="NCBI Taxonomy" id="9031"/>
    <lineage>
        <taxon>Eukaryota</taxon>
        <taxon>Metazoa</taxon>
        <taxon>Chordata</taxon>
        <taxon>Craniata</taxon>
        <taxon>Vertebrata</taxon>
        <taxon>Euteleostomi</taxon>
        <taxon>Archelosauria</taxon>
        <taxon>Archosauria</taxon>
        <taxon>Dinosauria</taxon>
        <taxon>Saurischia</taxon>
        <taxon>Theropoda</taxon>
        <taxon>Coelurosauria</taxon>
        <taxon>Aves</taxon>
        <taxon>Neognathae</taxon>
        <taxon>Galloanserae</taxon>
        <taxon>Galliformes</taxon>
        <taxon>Phasianidae</taxon>
        <taxon>Phasianinae</taxon>
        <taxon>Gallus</taxon>
    </lineage>
</organism>
<sequence>MSEAGRAAAGPCPEVSPSRSQQLGGLLRCLRDSETRRLELERKLMEYKSSDAYLMKLKYVKLKKYLEEVNERQKRALLRNQTFLNEFNEFEAHVKASSSELIEKMVRYGREIKSGLSFQEGDLARGDKEEGCNEQMPQAARQAGIHAKTALSRSLHHPVPFFMGHCMSACSVQQETPQPAACPNSLTALQGDETDGHPTQADDDMQHANKLDEQGGKSYVPMGEKMSIRDSSLHSSLLNFTERKNSTELCSALPDGGSLQSRTADLASDTSVEEVVTREHLVASAKEVCEQPVLLASAPEPSITGPQCNLNTQQAASQDSSSSSTHPEENYSLQPPSCCAAEDEPLGSSVPEGFCSQDGSLKEDLEASEAAVLCQLPEAKSGQQWDVATLQASLNSHTAFLEEHEHLCTEELAAVLHSTLDLDEEAPGSQAPPLLREVLAEECGDGSSVQSNESSYSLPSIPNDSREVEQAKHVLWLDSMGKQGCVIGNNGSEAKESQEMCSERSSSSERSGDLSRPEFRKGAITAIKSKAFWGESDDSSSEAVDALRPQTRSPEADDFDDFYD</sequence>
<feature type="chain" id="PRO_0000381814" description="Centrosomal protein kizuna">
    <location>
        <begin position="1"/>
        <end position="564"/>
    </location>
</feature>
<feature type="region of interest" description="Disordered" evidence="3">
    <location>
        <begin position="1"/>
        <end position="21"/>
    </location>
</feature>
<feature type="region of interest" description="Disordered" evidence="3">
    <location>
        <begin position="178"/>
        <end position="201"/>
    </location>
</feature>
<feature type="region of interest" description="Disordered" evidence="3">
    <location>
        <begin position="304"/>
        <end position="345"/>
    </location>
</feature>
<feature type="region of interest" description="Disordered" evidence="3">
    <location>
        <begin position="442"/>
        <end position="465"/>
    </location>
</feature>
<feature type="region of interest" description="Disordered" evidence="3">
    <location>
        <begin position="487"/>
        <end position="519"/>
    </location>
</feature>
<feature type="region of interest" description="Disordered" evidence="3">
    <location>
        <begin position="531"/>
        <end position="564"/>
    </location>
</feature>
<feature type="coiled-coil region" evidence="2">
    <location>
        <begin position="28"/>
        <end position="50"/>
    </location>
</feature>
<feature type="compositionally biased region" description="Low complexity" evidence="3">
    <location>
        <begin position="313"/>
        <end position="324"/>
    </location>
</feature>
<feature type="compositionally biased region" description="Polar residues" evidence="3">
    <location>
        <begin position="447"/>
        <end position="463"/>
    </location>
</feature>
<feature type="compositionally biased region" description="Basic and acidic residues" evidence="3">
    <location>
        <begin position="493"/>
        <end position="519"/>
    </location>
</feature>
<comment type="function">
    <text evidence="1">Centrosomal protein required for establishing a robust mitotic centrosome architecture that can endure the forces that converge on the centrosomes during spindle formation. Required for stabilizing the expanded pericentriolar material around the centriole.</text>
</comment>
<comment type="subcellular location">
    <subcellularLocation>
        <location evidence="1">Cytoplasm</location>
        <location evidence="1">Cytoskeleton</location>
        <location evidence="1">Microtubule organizing center</location>
        <location evidence="1">Centrosome</location>
    </subcellularLocation>
    <subcellularLocation>
        <location evidence="1">Cytoplasm</location>
        <location evidence="1">Cytoskeleton</location>
        <location evidence="1">Cilium basal body</location>
    </subcellularLocation>
</comment>
<comment type="similarity">
    <text evidence="4">Belongs to the kizuna family.</text>
</comment>
<reference key="1">
    <citation type="journal article" date="2005" name="Genome Biol.">
        <title>Full-length cDNAs from chicken bursal lymphocytes to facilitate gene function analysis.</title>
        <authorList>
            <person name="Caldwell R.B."/>
            <person name="Kierzek A.M."/>
            <person name="Arakawa H."/>
            <person name="Bezzubov Y."/>
            <person name="Zaim J."/>
            <person name="Fiedler P."/>
            <person name="Kutter S."/>
            <person name="Blagodatski A."/>
            <person name="Kostovska D."/>
            <person name="Koter M."/>
            <person name="Plachy J."/>
            <person name="Carninci P."/>
            <person name="Hayashizaki Y."/>
            <person name="Buerstedde J.-M."/>
        </authorList>
    </citation>
    <scope>NUCLEOTIDE SEQUENCE [LARGE SCALE MRNA]</scope>
    <source>
        <strain>CB</strain>
        <tissue>Bursa of Fabricius</tissue>
    </source>
</reference>
<name>KIZ_CHICK</name>